<organism>
    <name type="scientific">Shewanella baltica (strain OS195)</name>
    <dbReference type="NCBI Taxonomy" id="399599"/>
    <lineage>
        <taxon>Bacteria</taxon>
        <taxon>Pseudomonadati</taxon>
        <taxon>Pseudomonadota</taxon>
        <taxon>Gammaproteobacteria</taxon>
        <taxon>Alteromonadales</taxon>
        <taxon>Shewanellaceae</taxon>
        <taxon>Shewanella</taxon>
    </lineage>
</organism>
<accession>A9KTY6</accession>
<dbReference type="EC" id="4.3.2.1" evidence="1"/>
<dbReference type="EMBL" id="CP000891">
    <property type="protein sequence ID" value="ABX51367.1"/>
    <property type="molecule type" value="Genomic_DNA"/>
</dbReference>
<dbReference type="RefSeq" id="WP_012197751.1">
    <property type="nucleotide sequence ID" value="NC_009997.1"/>
</dbReference>
<dbReference type="SMR" id="A9KTY6"/>
<dbReference type="GeneID" id="11774195"/>
<dbReference type="KEGG" id="sbn:Sbal195_4209"/>
<dbReference type="HOGENOM" id="CLU_027272_2_3_6"/>
<dbReference type="UniPathway" id="UPA00068">
    <property type="reaction ID" value="UER00114"/>
</dbReference>
<dbReference type="Proteomes" id="UP000000770">
    <property type="component" value="Chromosome"/>
</dbReference>
<dbReference type="GO" id="GO:0005829">
    <property type="term" value="C:cytosol"/>
    <property type="evidence" value="ECO:0007669"/>
    <property type="project" value="TreeGrafter"/>
</dbReference>
<dbReference type="GO" id="GO:0004056">
    <property type="term" value="F:argininosuccinate lyase activity"/>
    <property type="evidence" value="ECO:0007669"/>
    <property type="project" value="UniProtKB-UniRule"/>
</dbReference>
<dbReference type="GO" id="GO:0042450">
    <property type="term" value="P:arginine biosynthetic process via ornithine"/>
    <property type="evidence" value="ECO:0007669"/>
    <property type="project" value="InterPro"/>
</dbReference>
<dbReference type="GO" id="GO:0006526">
    <property type="term" value="P:L-arginine biosynthetic process"/>
    <property type="evidence" value="ECO:0007669"/>
    <property type="project" value="UniProtKB-UniRule"/>
</dbReference>
<dbReference type="CDD" id="cd01359">
    <property type="entry name" value="Argininosuccinate_lyase"/>
    <property type="match status" value="1"/>
</dbReference>
<dbReference type="FunFam" id="1.10.40.30:FF:000001">
    <property type="entry name" value="Argininosuccinate lyase"/>
    <property type="match status" value="1"/>
</dbReference>
<dbReference type="FunFam" id="1.20.200.10:FF:000006">
    <property type="entry name" value="Argininosuccinate lyase"/>
    <property type="match status" value="1"/>
</dbReference>
<dbReference type="Gene3D" id="1.10.40.30">
    <property type="entry name" value="Fumarase/aspartase (C-terminal domain)"/>
    <property type="match status" value="1"/>
</dbReference>
<dbReference type="Gene3D" id="1.20.200.10">
    <property type="entry name" value="Fumarase/aspartase (Central domain)"/>
    <property type="match status" value="1"/>
</dbReference>
<dbReference type="Gene3D" id="1.10.275.10">
    <property type="entry name" value="Fumarase/aspartase (N-terminal domain)"/>
    <property type="match status" value="1"/>
</dbReference>
<dbReference type="HAMAP" id="MF_00006">
    <property type="entry name" value="Arg_succ_lyase"/>
    <property type="match status" value="1"/>
</dbReference>
<dbReference type="InterPro" id="IPR029419">
    <property type="entry name" value="Arg_succ_lyase_C"/>
</dbReference>
<dbReference type="InterPro" id="IPR009049">
    <property type="entry name" value="Argininosuccinate_lyase"/>
</dbReference>
<dbReference type="InterPro" id="IPR024083">
    <property type="entry name" value="Fumarase/histidase_N"/>
</dbReference>
<dbReference type="InterPro" id="IPR020557">
    <property type="entry name" value="Fumarate_lyase_CS"/>
</dbReference>
<dbReference type="InterPro" id="IPR000362">
    <property type="entry name" value="Fumarate_lyase_fam"/>
</dbReference>
<dbReference type="InterPro" id="IPR022761">
    <property type="entry name" value="Fumarate_lyase_N"/>
</dbReference>
<dbReference type="InterPro" id="IPR008948">
    <property type="entry name" value="L-Aspartase-like"/>
</dbReference>
<dbReference type="NCBIfam" id="TIGR00838">
    <property type="entry name" value="argH"/>
    <property type="match status" value="1"/>
</dbReference>
<dbReference type="NCBIfam" id="NF008964">
    <property type="entry name" value="PRK12308.1"/>
    <property type="match status" value="1"/>
</dbReference>
<dbReference type="PANTHER" id="PTHR43814">
    <property type="entry name" value="ARGININOSUCCINATE LYASE"/>
    <property type="match status" value="1"/>
</dbReference>
<dbReference type="PANTHER" id="PTHR43814:SF1">
    <property type="entry name" value="ARGININOSUCCINATE LYASE"/>
    <property type="match status" value="1"/>
</dbReference>
<dbReference type="Pfam" id="PF14698">
    <property type="entry name" value="ASL_C2"/>
    <property type="match status" value="1"/>
</dbReference>
<dbReference type="Pfam" id="PF00206">
    <property type="entry name" value="Lyase_1"/>
    <property type="match status" value="1"/>
</dbReference>
<dbReference type="PRINTS" id="PR00145">
    <property type="entry name" value="ARGSUCLYASE"/>
</dbReference>
<dbReference type="PRINTS" id="PR00149">
    <property type="entry name" value="FUMRATELYASE"/>
</dbReference>
<dbReference type="SUPFAM" id="SSF48557">
    <property type="entry name" value="L-aspartase-like"/>
    <property type="match status" value="1"/>
</dbReference>
<dbReference type="PROSITE" id="PS00163">
    <property type="entry name" value="FUMARATE_LYASES"/>
    <property type="match status" value="1"/>
</dbReference>
<comment type="catalytic activity">
    <reaction evidence="1">
        <text>2-(N(omega)-L-arginino)succinate = fumarate + L-arginine</text>
        <dbReference type="Rhea" id="RHEA:24020"/>
        <dbReference type="ChEBI" id="CHEBI:29806"/>
        <dbReference type="ChEBI" id="CHEBI:32682"/>
        <dbReference type="ChEBI" id="CHEBI:57472"/>
        <dbReference type="EC" id="4.3.2.1"/>
    </reaction>
</comment>
<comment type="pathway">
    <text evidence="1">Amino-acid biosynthesis; L-arginine biosynthesis; L-arginine from L-ornithine and carbamoyl phosphate: step 3/3.</text>
</comment>
<comment type="subcellular location">
    <subcellularLocation>
        <location evidence="1">Cytoplasm</location>
    </subcellularLocation>
</comment>
<comment type="similarity">
    <text evidence="1">Belongs to the lyase 1 family. Argininosuccinate lyase subfamily.</text>
</comment>
<reference key="1">
    <citation type="submission" date="2007-11" db="EMBL/GenBank/DDBJ databases">
        <title>Complete sequence of chromosome of Shewanella baltica OS195.</title>
        <authorList>
            <consortium name="US DOE Joint Genome Institute"/>
            <person name="Copeland A."/>
            <person name="Lucas S."/>
            <person name="Lapidus A."/>
            <person name="Barry K."/>
            <person name="Glavina del Rio T."/>
            <person name="Dalin E."/>
            <person name="Tice H."/>
            <person name="Pitluck S."/>
            <person name="Chain P."/>
            <person name="Malfatti S."/>
            <person name="Shin M."/>
            <person name="Vergez L."/>
            <person name="Schmutz J."/>
            <person name="Larimer F."/>
            <person name="Land M."/>
            <person name="Hauser L."/>
            <person name="Kyrpides N."/>
            <person name="Kim E."/>
            <person name="Brettar I."/>
            <person name="Rodrigues J."/>
            <person name="Konstantinidis K."/>
            <person name="Klappenbach J."/>
            <person name="Hofle M."/>
            <person name="Tiedje J."/>
            <person name="Richardson P."/>
        </authorList>
    </citation>
    <scope>NUCLEOTIDE SEQUENCE [LARGE SCALE GENOMIC DNA]</scope>
    <source>
        <strain>OS195</strain>
    </source>
</reference>
<keyword id="KW-0028">Amino-acid biosynthesis</keyword>
<keyword id="KW-0055">Arginine biosynthesis</keyword>
<keyword id="KW-0963">Cytoplasm</keyword>
<keyword id="KW-0456">Lyase</keyword>
<feature type="chain" id="PRO_1000073857" description="Argininosuccinate lyase">
    <location>
        <begin position="1"/>
        <end position="455"/>
    </location>
</feature>
<proteinExistence type="inferred from homology"/>
<sequence length="455" mass="49153">MALWGGRFQGETSALFKLFNDSLPVDYRLFEQDVVGSIAWADAIASVGIITATECSDLKKALNDLLVEVNGDPAIILASGAEDIHSFVESALIAKVGDLGKKLHTGRSRNDQVATDLKLWCQSEGAALLARLHSLHAELLALAEREFDAVMPGYTHLQRAQPVTFGHWCLAYVEMYERDISRLADALTRANTCPLGSGALAGTAYKMDRHALAAALNFASPTLNSLDSVSDRDHVVELCSTASISMMHLSRMAEDLIFFNSGEANFISLSDEVTSGSSLMPQKKNPDALELIRGKTGRVYGSLVGILTTMKALPLAYNKDMQEDKEGLFDVVDSWAICLDMAALVLSGLKVNRPNALLAAQQGYANSTELADYLVSKGMPFREAHHVVGEVVVAAIAKQIPLEEFSLAELKTFAAIIEDDVYPNLTIEACLAKRDVLGGTALPQIQQAIAAKKAR</sequence>
<name>ARLY_SHEB9</name>
<evidence type="ECO:0000255" key="1">
    <source>
        <dbReference type="HAMAP-Rule" id="MF_00006"/>
    </source>
</evidence>
<gene>
    <name evidence="1" type="primary">argH</name>
    <name type="ordered locus">Sbal195_4209</name>
</gene>
<protein>
    <recommendedName>
        <fullName evidence="1">Argininosuccinate lyase</fullName>
        <shortName evidence="1">ASAL</shortName>
        <ecNumber evidence="1">4.3.2.1</ecNumber>
    </recommendedName>
    <alternativeName>
        <fullName evidence="1">Arginosuccinase</fullName>
    </alternativeName>
</protein>